<dbReference type="EMBL" id="CP001072">
    <property type="protein sequence ID" value="ACD48746.1"/>
    <property type="molecule type" value="Genomic_DNA"/>
</dbReference>
<dbReference type="RefSeq" id="WP_001869179.1">
    <property type="nucleotide sequence ID" value="NC_010698.2"/>
</dbReference>
<dbReference type="SMR" id="B2UV64"/>
<dbReference type="KEGG" id="hps:HPSH_06730"/>
<dbReference type="HOGENOM" id="CLU_055188_6_0_7"/>
<dbReference type="GO" id="GO:0022625">
    <property type="term" value="C:cytosolic large ribosomal subunit"/>
    <property type="evidence" value="ECO:0007669"/>
    <property type="project" value="TreeGrafter"/>
</dbReference>
<dbReference type="GO" id="GO:0019843">
    <property type="term" value="F:rRNA binding"/>
    <property type="evidence" value="ECO:0007669"/>
    <property type="project" value="UniProtKB-UniRule"/>
</dbReference>
<dbReference type="GO" id="GO:0003735">
    <property type="term" value="F:structural constituent of ribosome"/>
    <property type="evidence" value="ECO:0007669"/>
    <property type="project" value="InterPro"/>
</dbReference>
<dbReference type="GO" id="GO:0006412">
    <property type="term" value="P:translation"/>
    <property type="evidence" value="ECO:0007669"/>
    <property type="project" value="UniProtKB-UniRule"/>
</dbReference>
<dbReference type="HAMAP" id="MF_01341">
    <property type="entry name" value="Ribosomal_uL15"/>
    <property type="match status" value="1"/>
</dbReference>
<dbReference type="InterPro" id="IPR030878">
    <property type="entry name" value="Ribosomal_uL15"/>
</dbReference>
<dbReference type="InterPro" id="IPR036227">
    <property type="entry name" value="Ribosomal_uL15/eL18_sf"/>
</dbReference>
<dbReference type="InterPro" id="IPR005749">
    <property type="entry name" value="Ribosomal_uL15_bac-type"/>
</dbReference>
<dbReference type="NCBIfam" id="TIGR01071">
    <property type="entry name" value="rplO_bact"/>
    <property type="match status" value="1"/>
</dbReference>
<dbReference type="PANTHER" id="PTHR12934">
    <property type="entry name" value="50S RIBOSOMAL PROTEIN L15"/>
    <property type="match status" value="1"/>
</dbReference>
<dbReference type="PANTHER" id="PTHR12934:SF11">
    <property type="entry name" value="LARGE RIBOSOMAL SUBUNIT PROTEIN UL15M"/>
    <property type="match status" value="1"/>
</dbReference>
<dbReference type="SUPFAM" id="SSF52080">
    <property type="entry name" value="Ribosomal proteins L15p and L18e"/>
    <property type="match status" value="1"/>
</dbReference>
<proteinExistence type="inferred from homology"/>
<feature type="chain" id="PRO_1000142829" description="Large ribosomal subunit protein uL15">
    <location>
        <begin position="1"/>
        <end position="133"/>
    </location>
</feature>
<feature type="region of interest" description="Disordered" evidence="2">
    <location>
        <begin position="1"/>
        <end position="64"/>
    </location>
</feature>
<evidence type="ECO:0000255" key="1">
    <source>
        <dbReference type="HAMAP-Rule" id="MF_01341"/>
    </source>
</evidence>
<evidence type="ECO:0000256" key="2">
    <source>
        <dbReference type="SAM" id="MobiDB-lite"/>
    </source>
</evidence>
<evidence type="ECO:0000305" key="3"/>
<gene>
    <name evidence="1" type="primary">rplO</name>
    <name type="ordered locus">HPSH_06730</name>
</gene>
<comment type="function">
    <text evidence="1">Binds to the 23S rRNA.</text>
</comment>
<comment type="subunit">
    <text evidence="1">Part of the 50S ribosomal subunit.</text>
</comment>
<comment type="similarity">
    <text evidence="1">Belongs to the universal ribosomal protein uL15 family.</text>
</comment>
<sequence length="133" mass="14590">MGLENLKPAKGSVKKIKRVGRGQGSGMGKTATRGGKGQTARTGYKAKRGFEGGQQPLQRRLPKIGFRTKDSHIYSINVEKNGAIKDLEEITFSSLRALHHFPLYIEGVKLIGKDAKNLASKIKDERIKTSGQK</sequence>
<keyword id="KW-0687">Ribonucleoprotein</keyword>
<keyword id="KW-0689">Ribosomal protein</keyword>
<keyword id="KW-0694">RNA-binding</keyword>
<keyword id="KW-0699">rRNA-binding</keyword>
<organism>
    <name type="scientific">Helicobacter pylori (strain Shi470)</name>
    <dbReference type="NCBI Taxonomy" id="512562"/>
    <lineage>
        <taxon>Bacteria</taxon>
        <taxon>Pseudomonadati</taxon>
        <taxon>Campylobacterota</taxon>
        <taxon>Epsilonproteobacteria</taxon>
        <taxon>Campylobacterales</taxon>
        <taxon>Helicobacteraceae</taxon>
        <taxon>Helicobacter</taxon>
    </lineage>
</organism>
<reference key="1">
    <citation type="submission" date="2008-05" db="EMBL/GenBank/DDBJ databases">
        <title>Genome sequence of Helicobacter pylori from the remote Amazon: traces of Asian ancestry of the first Americans.</title>
        <authorList>
            <person name="Kersulyte D."/>
            <person name="Kalia A."/>
            <person name="Gilman R.H."/>
            <person name="Berg D.E."/>
        </authorList>
    </citation>
    <scope>NUCLEOTIDE SEQUENCE [LARGE SCALE GENOMIC DNA]</scope>
    <source>
        <strain>Shi470</strain>
    </source>
</reference>
<protein>
    <recommendedName>
        <fullName evidence="1">Large ribosomal subunit protein uL15</fullName>
    </recommendedName>
    <alternativeName>
        <fullName evidence="3">50S ribosomal protein L15</fullName>
    </alternativeName>
</protein>
<name>RL15_HELPS</name>
<accession>B2UV64</accession>